<gene>
    <name evidence="1" type="primary">rpl33</name>
</gene>
<sequence>MAKNKEIRINVTLECTNCANNSQKSSRGISRYITQKNRRNTPNRLELNKFCPYCVGHTVHKEIKK</sequence>
<name>RK33_ZYGCR</name>
<accession>Q32RH3</accession>
<dbReference type="EMBL" id="AY958086">
    <property type="protein sequence ID" value="AAX45858.1"/>
    <property type="molecule type" value="Genomic_DNA"/>
</dbReference>
<dbReference type="RefSeq" id="YP_636553.1">
    <property type="nucleotide sequence ID" value="NC_008117.1"/>
</dbReference>
<dbReference type="GeneID" id="4108178"/>
<dbReference type="GO" id="GO:0009507">
    <property type="term" value="C:chloroplast"/>
    <property type="evidence" value="ECO:0007669"/>
    <property type="project" value="UniProtKB-SubCell"/>
</dbReference>
<dbReference type="GO" id="GO:1990904">
    <property type="term" value="C:ribonucleoprotein complex"/>
    <property type="evidence" value="ECO:0007669"/>
    <property type="project" value="UniProtKB-KW"/>
</dbReference>
<dbReference type="GO" id="GO:0005840">
    <property type="term" value="C:ribosome"/>
    <property type="evidence" value="ECO:0007669"/>
    <property type="project" value="UniProtKB-KW"/>
</dbReference>
<dbReference type="GO" id="GO:0003735">
    <property type="term" value="F:structural constituent of ribosome"/>
    <property type="evidence" value="ECO:0007669"/>
    <property type="project" value="InterPro"/>
</dbReference>
<dbReference type="GO" id="GO:0006412">
    <property type="term" value="P:translation"/>
    <property type="evidence" value="ECO:0007669"/>
    <property type="project" value="UniProtKB-UniRule"/>
</dbReference>
<dbReference type="Gene3D" id="2.20.28.120">
    <property type="entry name" value="Ribosomal protein L33"/>
    <property type="match status" value="1"/>
</dbReference>
<dbReference type="HAMAP" id="MF_00294">
    <property type="entry name" value="Ribosomal_bL33"/>
    <property type="match status" value="1"/>
</dbReference>
<dbReference type="InterPro" id="IPR001705">
    <property type="entry name" value="Ribosomal_bL33"/>
</dbReference>
<dbReference type="InterPro" id="IPR018264">
    <property type="entry name" value="Ribosomal_bL33_CS"/>
</dbReference>
<dbReference type="InterPro" id="IPR038584">
    <property type="entry name" value="Ribosomal_bL33_sf"/>
</dbReference>
<dbReference type="InterPro" id="IPR011332">
    <property type="entry name" value="Ribosomal_zn-bd"/>
</dbReference>
<dbReference type="NCBIfam" id="NF001764">
    <property type="entry name" value="PRK00504.1"/>
    <property type="match status" value="1"/>
</dbReference>
<dbReference type="NCBIfam" id="NF001860">
    <property type="entry name" value="PRK00595.1"/>
    <property type="match status" value="1"/>
</dbReference>
<dbReference type="NCBIfam" id="TIGR01023">
    <property type="entry name" value="rpmG_bact"/>
    <property type="match status" value="1"/>
</dbReference>
<dbReference type="PANTHER" id="PTHR43168">
    <property type="entry name" value="50S RIBOSOMAL PROTEIN L33, CHLOROPLASTIC"/>
    <property type="match status" value="1"/>
</dbReference>
<dbReference type="PANTHER" id="PTHR43168:SF2">
    <property type="entry name" value="LARGE RIBOSOMAL SUBUNIT PROTEIN BL33C"/>
    <property type="match status" value="1"/>
</dbReference>
<dbReference type="Pfam" id="PF00471">
    <property type="entry name" value="Ribosomal_L33"/>
    <property type="match status" value="1"/>
</dbReference>
<dbReference type="SUPFAM" id="SSF57829">
    <property type="entry name" value="Zn-binding ribosomal proteins"/>
    <property type="match status" value="1"/>
</dbReference>
<dbReference type="PROSITE" id="PS00582">
    <property type="entry name" value="RIBOSOMAL_L33"/>
    <property type="match status" value="1"/>
</dbReference>
<keyword id="KW-0150">Chloroplast</keyword>
<keyword id="KW-0934">Plastid</keyword>
<keyword id="KW-0687">Ribonucleoprotein</keyword>
<keyword id="KW-0689">Ribosomal protein</keyword>
<feature type="chain" id="PRO_0000276522" description="Large ribosomal subunit protein bL33c">
    <location>
        <begin position="1"/>
        <end position="65"/>
    </location>
</feature>
<organism>
    <name type="scientific">Zygnema circumcarinatum</name>
    <name type="common">Green alga</name>
    <dbReference type="NCBI Taxonomy" id="35869"/>
    <lineage>
        <taxon>Eukaryota</taxon>
        <taxon>Viridiplantae</taxon>
        <taxon>Streptophyta</taxon>
        <taxon>Zygnematophyceae</taxon>
        <taxon>Zygnematophycidae</taxon>
        <taxon>Zygnematales</taxon>
        <taxon>Zygnemataceae</taxon>
        <taxon>Zygnema</taxon>
    </lineage>
</organism>
<reference key="1">
    <citation type="journal article" date="2005" name="BMC Biol.">
        <title>The complete chloroplast DNA sequences of the charophycean green algae Staurastrum and Zygnema reveal that the chloroplast genome underwent extensive changes during the evolution of the Zygnematales.</title>
        <authorList>
            <person name="Turmel M."/>
            <person name="Otis C."/>
            <person name="Lemieux C."/>
        </authorList>
    </citation>
    <scope>NUCLEOTIDE SEQUENCE [LARGE SCALE GENOMIC DNA]</scope>
</reference>
<comment type="subcellular location">
    <subcellularLocation>
        <location>Plastid</location>
        <location>Chloroplast</location>
    </subcellularLocation>
</comment>
<comment type="similarity">
    <text evidence="1">Belongs to the bacterial ribosomal protein bL33 family.</text>
</comment>
<proteinExistence type="inferred from homology"/>
<evidence type="ECO:0000255" key="1">
    <source>
        <dbReference type="HAMAP-Rule" id="MF_00294"/>
    </source>
</evidence>
<evidence type="ECO:0000305" key="2"/>
<protein>
    <recommendedName>
        <fullName evidence="1">Large ribosomal subunit protein bL33c</fullName>
    </recommendedName>
    <alternativeName>
        <fullName evidence="2">50S ribosomal protein L33, chloroplastic</fullName>
    </alternativeName>
</protein>
<geneLocation type="chloroplast"/>